<keyword id="KW-1185">Reference proteome</keyword>
<comment type="similarity">
    <text evidence="1">Belongs to the hssA/B family.</text>
</comment>
<protein>
    <recommendedName>
        <fullName>HssA/B-like protein 59</fullName>
    </recommendedName>
</protein>
<sequence>MTILASISSIGNIKSSSKSNIASFSSSSLQSLNSIQCCSCSPALGNTVGNLVGGVLFGTGVIVGSVLNTVGNITTPILHPDCGCN</sequence>
<name>HSL59_DICDI</name>
<feature type="chain" id="PRO_0000330427" description="HssA/B-like protein 59">
    <location>
        <begin position="1"/>
        <end position="85"/>
    </location>
</feature>
<evidence type="ECO:0000305" key="1"/>
<gene>
    <name type="primary">hssl59</name>
    <name type="ORF">DDB_G0283711</name>
</gene>
<organism>
    <name type="scientific">Dictyostelium discoideum</name>
    <name type="common">Social amoeba</name>
    <dbReference type="NCBI Taxonomy" id="44689"/>
    <lineage>
        <taxon>Eukaryota</taxon>
        <taxon>Amoebozoa</taxon>
        <taxon>Evosea</taxon>
        <taxon>Eumycetozoa</taxon>
        <taxon>Dictyostelia</taxon>
        <taxon>Dictyosteliales</taxon>
        <taxon>Dictyosteliaceae</taxon>
        <taxon>Dictyostelium</taxon>
    </lineage>
</organism>
<accession>Q54QP5</accession>
<reference key="1">
    <citation type="journal article" date="2005" name="Nature">
        <title>The genome of the social amoeba Dictyostelium discoideum.</title>
        <authorList>
            <person name="Eichinger L."/>
            <person name="Pachebat J.A."/>
            <person name="Gloeckner G."/>
            <person name="Rajandream M.A."/>
            <person name="Sucgang R."/>
            <person name="Berriman M."/>
            <person name="Song J."/>
            <person name="Olsen R."/>
            <person name="Szafranski K."/>
            <person name="Xu Q."/>
            <person name="Tunggal B."/>
            <person name="Kummerfeld S."/>
            <person name="Madera M."/>
            <person name="Konfortov B.A."/>
            <person name="Rivero F."/>
            <person name="Bankier A.T."/>
            <person name="Lehmann R."/>
            <person name="Hamlin N."/>
            <person name="Davies R."/>
            <person name="Gaudet P."/>
            <person name="Fey P."/>
            <person name="Pilcher K."/>
            <person name="Chen G."/>
            <person name="Saunders D."/>
            <person name="Sodergren E.J."/>
            <person name="Davis P."/>
            <person name="Kerhornou A."/>
            <person name="Nie X."/>
            <person name="Hall N."/>
            <person name="Anjard C."/>
            <person name="Hemphill L."/>
            <person name="Bason N."/>
            <person name="Farbrother P."/>
            <person name="Desany B."/>
            <person name="Just E."/>
            <person name="Morio T."/>
            <person name="Rost R."/>
            <person name="Churcher C.M."/>
            <person name="Cooper J."/>
            <person name="Haydock S."/>
            <person name="van Driessche N."/>
            <person name="Cronin A."/>
            <person name="Goodhead I."/>
            <person name="Muzny D.M."/>
            <person name="Mourier T."/>
            <person name="Pain A."/>
            <person name="Lu M."/>
            <person name="Harper D."/>
            <person name="Lindsay R."/>
            <person name="Hauser H."/>
            <person name="James K.D."/>
            <person name="Quiles M."/>
            <person name="Madan Babu M."/>
            <person name="Saito T."/>
            <person name="Buchrieser C."/>
            <person name="Wardroper A."/>
            <person name="Felder M."/>
            <person name="Thangavelu M."/>
            <person name="Johnson D."/>
            <person name="Knights A."/>
            <person name="Loulseged H."/>
            <person name="Mungall K.L."/>
            <person name="Oliver K."/>
            <person name="Price C."/>
            <person name="Quail M.A."/>
            <person name="Urushihara H."/>
            <person name="Hernandez J."/>
            <person name="Rabbinowitsch E."/>
            <person name="Steffen D."/>
            <person name="Sanders M."/>
            <person name="Ma J."/>
            <person name="Kohara Y."/>
            <person name="Sharp S."/>
            <person name="Simmonds M.N."/>
            <person name="Spiegler S."/>
            <person name="Tivey A."/>
            <person name="Sugano S."/>
            <person name="White B."/>
            <person name="Walker D."/>
            <person name="Woodward J.R."/>
            <person name="Winckler T."/>
            <person name="Tanaka Y."/>
            <person name="Shaulsky G."/>
            <person name="Schleicher M."/>
            <person name="Weinstock G.M."/>
            <person name="Rosenthal A."/>
            <person name="Cox E.C."/>
            <person name="Chisholm R.L."/>
            <person name="Gibbs R.A."/>
            <person name="Loomis W.F."/>
            <person name="Platzer M."/>
            <person name="Kay R.R."/>
            <person name="Williams J.G."/>
            <person name="Dear P.H."/>
            <person name="Noegel A.A."/>
            <person name="Barrell B.G."/>
            <person name="Kuspa A."/>
        </authorList>
    </citation>
    <scope>NUCLEOTIDE SEQUENCE [LARGE SCALE GENOMIC DNA]</scope>
    <source>
        <strain>AX4</strain>
    </source>
</reference>
<proteinExistence type="inferred from homology"/>
<dbReference type="EMBL" id="AAFI02000056">
    <property type="protein sequence ID" value="EAL65622.1"/>
    <property type="molecule type" value="Genomic_DNA"/>
</dbReference>
<dbReference type="RefSeq" id="XP_638978.1">
    <property type="nucleotide sequence ID" value="XM_633886.1"/>
</dbReference>
<dbReference type="FunCoup" id="Q54QP5">
    <property type="interactions" value="108"/>
</dbReference>
<dbReference type="PaxDb" id="44689-DDB0252777"/>
<dbReference type="EnsemblProtists" id="EAL65622">
    <property type="protein sequence ID" value="EAL65622"/>
    <property type="gene ID" value="DDB_G0283711"/>
</dbReference>
<dbReference type="GeneID" id="8624224"/>
<dbReference type="KEGG" id="ddi:DDB_G0283711"/>
<dbReference type="dictyBase" id="DDB_G0283711"/>
<dbReference type="HOGENOM" id="CLU_190274_0_0_1"/>
<dbReference type="InParanoid" id="Q54QP5"/>
<dbReference type="PRO" id="PR:Q54QP5"/>
<dbReference type="Proteomes" id="UP000002195">
    <property type="component" value="Chromosome 4"/>
</dbReference>
<dbReference type="InterPro" id="IPR008455">
    <property type="entry name" value="HssA/B-related"/>
</dbReference>
<dbReference type="PANTHER" id="PTHR31857">
    <property type="entry name" value="HSSA/B-LIKE PROTEIN 17-RELATED"/>
    <property type="match status" value="1"/>
</dbReference>
<dbReference type="PANTHER" id="PTHR31857:SF2">
    <property type="entry name" value="HSSA_B-LIKE PROTEIN 17-RELATED"/>
    <property type="match status" value="1"/>
</dbReference>
<dbReference type="Pfam" id="PF05710">
    <property type="entry name" value="Coiled"/>
    <property type="match status" value="1"/>
</dbReference>